<feature type="chain" id="PRO_0000186236" description="Putative BTB/POZ domain-containing protein L788">
    <location>
        <begin position="1"/>
        <end position="498"/>
    </location>
</feature>
<feature type="domain" description="BTB" evidence="1">
    <location>
        <begin position="28"/>
        <end position="99"/>
    </location>
</feature>
<comment type="similarity">
    <text evidence="2">Belongs to the mimivirus BTB/WD family.</text>
</comment>
<name>YL788_MIMIV</name>
<evidence type="ECO:0000255" key="1">
    <source>
        <dbReference type="PROSITE-ProRule" id="PRU00037"/>
    </source>
</evidence>
<evidence type="ECO:0000305" key="2"/>
<proteinExistence type="inferred from homology"/>
<keyword id="KW-1185">Reference proteome</keyword>
<organismHost>
    <name type="scientific">Acanthamoeba polyphaga</name>
    <name type="common">Amoeba</name>
    <dbReference type="NCBI Taxonomy" id="5757"/>
</organismHost>
<reference key="1">
    <citation type="journal article" date="2004" name="Science">
        <title>The 1.2-megabase genome sequence of Mimivirus.</title>
        <authorList>
            <person name="Raoult D."/>
            <person name="Audic S."/>
            <person name="Robert C."/>
            <person name="Abergel C."/>
            <person name="Renesto P."/>
            <person name="Ogata H."/>
            <person name="La Scola B."/>
            <person name="Susan M."/>
            <person name="Claverie J.-M."/>
        </authorList>
    </citation>
    <scope>NUCLEOTIDE SEQUENCE [LARGE SCALE GENOMIC DNA]</scope>
    <source>
        <strain>Rowbotham-Bradford</strain>
    </source>
</reference>
<organism>
    <name type="scientific">Acanthamoeba polyphaga mimivirus</name>
    <name type="common">APMV</name>
    <dbReference type="NCBI Taxonomy" id="212035"/>
    <lineage>
        <taxon>Viruses</taxon>
        <taxon>Varidnaviria</taxon>
        <taxon>Bamfordvirae</taxon>
        <taxon>Nucleocytoviricota</taxon>
        <taxon>Megaviricetes</taxon>
        <taxon>Imitervirales</taxon>
        <taxon>Mimiviridae</taxon>
        <taxon>Megamimivirinae</taxon>
        <taxon>Mimivirus</taxon>
        <taxon>Mimivirus bradfordmassiliense</taxon>
    </lineage>
</organism>
<sequence>MCELFVCYKTSIMDLDKLYQLAVNNQFTDIILVLEDDKETIIIGAHKCILYASCPYFEKLFATTMKESIQSRINIRVPNSHVFCNIISGFYGQKIKSGNIEPWKYQLDTILCRDFLGLEITNSLLNDLIVPPENFDDLLKITELIGFDEFAFDLIIKNIPSDYDLTKLSNELLKCLHDHTISQKILFYNNELSVWQQLNIFNYKANDLNLPKDLPVPKSLKNSTYNFEYDLLAYLDNNKRLFVVNIHTNQLTYHIKNMPDTDSIKLISENNLFMVSNNKFAILDLETNQYNKSLEIDNTNFKYSYFCGDIYVCCYEYSIDLYNIVNLELIRTHKLDNKIISLTCSSDNTLIACVCENWNFNMWSIETGELIESATIDDKFTRKFIGINFKYDNNNVIIILNKNCIYQFDIKTGMSTYKTLGWNLSDVIDYSSITNNLILLRCNTNKKNKPDEPVSEDFFVMSNCLDFKYMNLNTNNPLFVQYYTNEVGRKIKSVLGKE</sequence>
<dbReference type="EMBL" id="AY653733">
    <property type="protein sequence ID" value="AAV51048.1"/>
    <property type="molecule type" value="Genomic_DNA"/>
</dbReference>
<dbReference type="SMR" id="Q5UQ07"/>
<dbReference type="KEGG" id="vg:9925449"/>
<dbReference type="OrthoDB" id="7868at10239"/>
<dbReference type="Proteomes" id="UP000001134">
    <property type="component" value="Genome"/>
</dbReference>
<dbReference type="CDD" id="cd18186">
    <property type="entry name" value="BTB_POZ_ZBTB_KLHL-like"/>
    <property type="match status" value="1"/>
</dbReference>
<dbReference type="Gene3D" id="3.30.710.10">
    <property type="entry name" value="Potassium Channel Kv1.1, Chain A"/>
    <property type="match status" value="1"/>
</dbReference>
<dbReference type="Gene3D" id="2.130.10.10">
    <property type="entry name" value="YVTN repeat-like/Quinoprotein amine dehydrogenase"/>
    <property type="match status" value="1"/>
</dbReference>
<dbReference type="InterPro" id="IPR000210">
    <property type="entry name" value="BTB/POZ_dom"/>
</dbReference>
<dbReference type="InterPro" id="IPR011333">
    <property type="entry name" value="SKP1/BTB/POZ_sf"/>
</dbReference>
<dbReference type="InterPro" id="IPR015943">
    <property type="entry name" value="WD40/YVTN_repeat-like_dom_sf"/>
</dbReference>
<dbReference type="Pfam" id="PF00651">
    <property type="entry name" value="BTB"/>
    <property type="match status" value="1"/>
</dbReference>
<dbReference type="SUPFAM" id="SSF54695">
    <property type="entry name" value="POZ domain"/>
    <property type="match status" value="1"/>
</dbReference>
<dbReference type="SUPFAM" id="SSF69322">
    <property type="entry name" value="Tricorn protease domain 2"/>
    <property type="match status" value="1"/>
</dbReference>
<dbReference type="PROSITE" id="PS50097">
    <property type="entry name" value="BTB"/>
    <property type="match status" value="1"/>
</dbReference>
<accession>Q5UQ07</accession>
<protein>
    <recommendedName>
        <fullName>Putative BTB/POZ domain-containing protein L788</fullName>
    </recommendedName>
</protein>
<gene>
    <name type="ordered locus">MIMI_L788</name>
</gene>